<reference key="1">
    <citation type="submission" date="2003-10" db="EMBL/GenBank/DDBJ databases">
        <title>The complete genome sequence of the alkaliphilic Bacillus clausii KSM-K16.</title>
        <authorList>
            <person name="Takaki Y."/>
            <person name="Kageyama Y."/>
            <person name="Shimamura S."/>
            <person name="Suzuki H."/>
            <person name="Nishi S."/>
            <person name="Hatada Y."/>
            <person name="Kawai S."/>
            <person name="Ito S."/>
            <person name="Horikoshi K."/>
        </authorList>
    </citation>
    <scope>NUCLEOTIDE SEQUENCE [LARGE SCALE GENOMIC DNA]</scope>
    <source>
        <strain>KSM-K16</strain>
    </source>
</reference>
<dbReference type="EC" id="2.7.2.11" evidence="1"/>
<dbReference type="EMBL" id="AP006627">
    <property type="protein sequence ID" value="BAD64302.1"/>
    <property type="molecule type" value="Genomic_DNA"/>
</dbReference>
<dbReference type="RefSeq" id="WP_011246610.1">
    <property type="nucleotide sequence ID" value="NC_006582.1"/>
</dbReference>
<dbReference type="SMR" id="Q5WH53"/>
<dbReference type="STRING" id="66692.ABC1767"/>
<dbReference type="KEGG" id="bcl:ABC1767"/>
<dbReference type="eggNOG" id="COG0263">
    <property type="taxonomic scope" value="Bacteria"/>
</dbReference>
<dbReference type="HOGENOM" id="CLU_025400_2_0_9"/>
<dbReference type="OrthoDB" id="9804434at2"/>
<dbReference type="UniPathway" id="UPA00098">
    <property type="reaction ID" value="UER00359"/>
</dbReference>
<dbReference type="Proteomes" id="UP000001168">
    <property type="component" value="Chromosome"/>
</dbReference>
<dbReference type="GO" id="GO:0005829">
    <property type="term" value="C:cytosol"/>
    <property type="evidence" value="ECO:0007669"/>
    <property type="project" value="TreeGrafter"/>
</dbReference>
<dbReference type="GO" id="GO:0005524">
    <property type="term" value="F:ATP binding"/>
    <property type="evidence" value="ECO:0007669"/>
    <property type="project" value="UniProtKB-KW"/>
</dbReference>
<dbReference type="GO" id="GO:0004349">
    <property type="term" value="F:glutamate 5-kinase activity"/>
    <property type="evidence" value="ECO:0007669"/>
    <property type="project" value="UniProtKB-UniRule"/>
</dbReference>
<dbReference type="GO" id="GO:0003723">
    <property type="term" value="F:RNA binding"/>
    <property type="evidence" value="ECO:0007669"/>
    <property type="project" value="InterPro"/>
</dbReference>
<dbReference type="GO" id="GO:0055129">
    <property type="term" value="P:L-proline biosynthetic process"/>
    <property type="evidence" value="ECO:0007669"/>
    <property type="project" value="UniProtKB-UniRule"/>
</dbReference>
<dbReference type="CDD" id="cd04242">
    <property type="entry name" value="AAK_G5K_ProB"/>
    <property type="match status" value="1"/>
</dbReference>
<dbReference type="CDD" id="cd21157">
    <property type="entry name" value="PUA_G5K"/>
    <property type="match status" value="1"/>
</dbReference>
<dbReference type="FunFam" id="3.40.1160.10:FF:000018">
    <property type="entry name" value="Glutamate 5-kinase"/>
    <property type="match status" value="1"/>
</dbReference>
<dbReference type="Gene3D" id="3.40.1160.10">
    <property type="entry name" value="Acetylglutamate kinase-like"/>
    <property type="match status" value="1"/>
</dbReference>
<dbReference type="Gene3D" id="2.30.130.10">
    <property type="entry name" value="PUA domain"/>
    <property type="match status" value="1"/>
</dbReference>
<dbReference type="HAMAP" id="MF_00456">
    <property type="entry name" value="ProB"/>
    <property type="match status" value="1"/>
</dbReference>
<dbReference type="InterPro" id="IPR036393">
    <property type="entry name" value="AceGlu_kinase-like_sf"/>
</dbReference>
<dbReference type="InterPro" id="IPR001048">
    <property type="entry name" value="Asp/Glu/Uridylate_kinase"/>
</dbReference>
<dbReference type="InterPro" id="IPR041739">
    <property type="entry name" value="G5K_ProB"/>
</dbReference>
<dbReference type="InterPro" id="IPR001057">
    <property type="entry name" value="Glu/AcGlu_kinase"/>
</dbReference>
<dbReference type="InterPro" id="IPR011529">
    <property type="entry name" value="Glu_5kinase"/>
</dbReference>
<dbReference type="InterPro" id="IPR005715">
    <property type="entry name" value="Glu_5kinase/COase_Synthase"/>
</dbReference>
<dbReference type="InterPro" id="IPR019797">
    <property type="entry name" value="Glutamate_5-kinase_CS"/>
</dbReference>
<dbReference type="InterPro" id="IPR002478">
    <property type="entry name" value="PUA"/>
</dbReference>
<dbReference type="InterPro" id="IPR015947">
    <property type="entry name" value="PUA-like_sf"/>
</dbReference>
<dbReference type="InterPro" id="IPR036974">
    <property type="entry name" value="PUA_sf"/>
</dbReference>
<dbReference type="NCBIfam" id="TIGR01027">
    <property type="entry name" value="proB"/>
    <property type="match status" value="1"/>
</dbReference>
<dbReference type="PANTHER" id="PTHR43654">
    <property type="entry name" value="GLUTAMATE 5-KINASE"/>
    <property type="match status" value="1"/>
</dbReference>
<dbReference type="PANTHER" id="PTHR43654:SF1">
    <property type="entry name" value="ISOPENTENYL PHOSPHATE KINASE"/>
    <property type="match status" value="1"/>
</dbReference>
<dbReference type="Pfam" id="PF00696">
    <property type="entry name" value="AA_kinase"/>
    <property type="match status" value="1"/>
</dbReference>
<dbReference type="Pfam" id="PF01472">
    <property type="entry name" value="PUA"/>
    <property type="match status" value="1"/>
</dbReference>
<dbReference type="PIRSF" id="PIRSF000729">
    <property type="entry name" value="GK"/>
    <property type="match status" value="1"/>
</dbReference>
<dbReference type="PRINTS" id="PR00474">
    <property type="entry name" value="GLU5KINASE"/>
</dbReference>
<dbReference type="SMART" id="SM00359">
    <property type="entry name" value="PUA"/>
    <property type="match status" value="1"/>
</dbReference>
<dbReference type="SUPFAM" id="SSF53633">
    <property type="entry name" value="Carbamate kinase-like"/>
    <property type="match status" value="1"/>
</dbReference>
<dbReference type="SUPFAM" id="SSF88697">
    <property type="entry name" value="PUA domain-like"/>
    <property type="match status" value="1"/>
</dbReference>
<dbReference type="PROSITE" id="PS00902">
    <property type="entry name" value="GLUTAMATE_5_KINASE"/>
    <property type="match status" value="1"/>
</dbReference>
<dbReference type="PROSITE" id="PS50890">
    <property type="entry name" value="PUA"/>
    <property type="match status" value="1"/>
</dbReference>
<feature type="chain" id="PRO_0000109640" description="Glutamate 5-kinase">
    <location>
        <begin position="1"/>
        <end position="372"/>
    </location>
</feature>
<feature type="domain" description="PUA" evidence="1">
    <location>
        <begin position="276"/>
        <end position="353"/>
    </location>
</feature>
<feature type="binding site" evidence="1">
    <location>
        <position position="9"/>
    </location>
    <ligand>
        <name>ATP</name>
        <dbReference type="ChEBI" id="CHEBI:30616"/>
    </ligand>
</feature>
<feature type="binding site" evidence="1">
    <location>
        <position position="49"/>
    </location>
    <ligand>
        <name>substrate</name>
    </ligand>
</feature>
<feature type="binding site" evidence="1">
    <location>
        <position position="136"/>
    </location>
    <ligand>
        <name>substrate</name>
    </ligand>
</feature>
<feature type="binding site" evidence="1">
    <location>
        <position position="148"/>
    </location>
    <ligand>
        <name>substrate</name>
    </ligand>
</feature>
<feature type="binding site" evidence="1">
    <location>
        <begin position="168"/>
        <end position="169"/>
    </location>
    <ligand>
        <name>ATP</name>
        <dbReference type="ChEBI" id="CHEBI:30616"/>
    </ligand>
</feature>
<feature type="binding site" evidence="1">
    <location>
        <begin position="210"/>
        <end position="216"/>
    </location>
    <ligand>
        <name>ATP</name>
        <dbReference type="ChEBI" id="CHEBI:30616"/>
    </ligand>
</feature>
<accession>Q5WH53</accession>
<protein>
    <recommendedName>
        <fullName evidence="1">Glutamate 5-kinase</fullName>
        <ecNumber evidence="1">2.7.2.11</ecNumber>
    </recommendedName>
    <alternativeName>
        <fullName evidence="1">Gamma-glutamyl kinase</fullName>
        <shortName evidence="1">GK</shortName>
    </alternativeName>
</protein>
<gene>
    <name evidence="1" type="primary">proB</name>
    <name type="ordered locus">ABC1767</name>
</gene>
<proteinExistence type="inferred from homology"/>
<sequence>MATGTIVIKIGSSSLTDGNGALSTERLRGHVEAICELRHQGINVIVVTSGAVAAGFTLIGYHQRPKSISQKQAAAAVGQSLLMQAYMDAFRLHGYTAAQLLLTRADFADPARFSNISQTLRELLKRGAIPVINENDSTSVDELTFGDNDRLSALVSGIIHADMLCLYTDVNGVYDQNPNDSPNAKKYHYLASVPEALLDRVSADTSAVGTGGMKSKLLAAKTAIELGTNVFIGNGKGRETFTDVLLGKGDGTYLGPFTNKTMSTTKQWIVFHSEPAGSIEIDSGASTALLKRGKSLLPAGVLSAKGDFSAGDIIEVFFNNRPIGKGKTNFSKHELELIKGLNSEEALSLTKRSKKAVIHRDFWVATKKECSY</sequence>
<keyword id="KW-0028">Amino-acid biosynthesis</keyword>
<keyword id="KW-0067">ATP-binding</keyword>
<keyword id="KW-0963">Cytoplasm</keyword>
<keyword id="KW-0418">Kinase</keyword>
<keyword id="KW-0547">Nucleotide-binding</keyword>
<keyword id="KW-0641">Proline biosynthesis</keyword>
<keyword id="KW-1185">Reference proteome</keyword>
<keyword id="KW-0808">Transferase</keyword>
<comment type="function">
    <text evidence="1">Catalyzes the transfer of a phosphate group to glutamate to form L-glutamate 5-phosphate.</text>
</comment>
<comment type="catalytic activity">
    <reaction evidence="1">
        <text>L-glutamate + ATP = L-glutamyl 5-phosphate + ADP</text>
        <dbReference type="Rhea" id="RHEA:14877"/>
        <dbReference type="ChEBI" id="CHEBI:29985"/>
        <dbReference type="ChEBI" id="CHEBI:30616"/>
        <dbReference type="ChEBI" id="CHEBI:58274"/>
        <dbReference type="ChEBI" id="CHEBI:456216"/>
        <dbReference type="EC" id="2.7.2.11"/>
    </reaction>
</comment>
<comment type="pathway">
    <text evidence="1">Amino-acid biosynthesis; L-proline biosynthesis; L-glutamate 5-semialdehyde from L-glutamate: step 1/2.</text>
</comment>
<comment type="subcellular location">
    <subcellularLocation>
        <location evidence="1">Cytoplasm</location>
    </subcellularLocation>
</comment>
<comment type="similarity">
    <text evidence="1">Belongs to the glutamate 5-kinase family.</text>
</comment>
<evidence type="ECO:0000255" key="1">
    <source>
        <dbReference type="HAMAP-Rule" id="MF_00456"/>
    </source>
</evidence>
<name>PROB_SHOC1</name>
<organism>
    <name type="scientific">Shouchella clausii (strain KSM-K16)</name>
    <name type="common">Alkalihalobacillus clausii</name>
    <dbReference type="NCBI Taxonomy" id="66692"/>
    <lineage>
        <taxon>Bacteria</taxon>
        <taxon>Bacillati</taxon>
        <taxon>Bacillota</taxon>
        <taxon>Bacilli</taxon>
        <taxon>Bacillales</taxon>
        <taxon>Bacillaceae</taxon>
        <taxon>Shouchella</taxon>
    </lineage>
</organism>